<organism>
    <name type="scientific">Arabidopsis thaliana</name>
    <name type="common">Mouse-ear cress</name>
    <dbReference type="NCBI Taxonomy" id="3702"/>
    <lineage>
        <taxon>Eukaryota</taxon>
        <taxon>Viridiplantae</taxon>
        <taxon>Streptophyta</taxon>
        <taxon>Embryophyta</taxon>
        <taxon>Tracheophyta</taxon>
        <taxon>Spermatophyta</taxon>
        <taxon>Magnoliopsida</taxon>
        <taxon>eudicotyledons</taxon>
        <taxon>Gunneridae</taxon>
        <taxon>Pentapetalae</taxon>
        <taxon>rosids</taxon>
        <taxon>malvids</taxon>
        <taxon>Brassicales</taxon>
        <taxon>Brassicaceae</taxon>
        <taxon>Camelineae</taxon>
        <taxon>Arabidopsis</taxon>
    </lineage>
</organism>
<feature type="chain" id="PRO_0000068251" description="Putative casein kinase II subunit beta-4">
    <location>
        <begin position="1"/>
        <end position="283"/>
    </location>
</feature>
<feature type="region of interest" description="Disordered" evidence="2">
    <location>
        <begin position="1"/>
        <end position="23"/>
    </location>
</feature>
<feature type="region of interest" description="Disordered" evidence="2">
    <location>
        <begin position="35"/>
        <end position="92"/>
    </location>
</feature>
<feature type="compositionally biased region" description="Gly residues" evidence="2">
    <location>
        <begin position="7"/>
        <end position="16"/>
    </location>
</feature>
<feature type="compositionally biased region" description="Polar residues" evidence="2">
    <location>
        <begin position="58"/>
        <end position="70"/>
    </location>
</feature>
<feature type="splice variant" id="VSP_009188" description="In isoform 2." evidence="6">
    <original>GN</original>
    <variation>D</variation>
    <location>
        <begin position="239"/>
        <end position="240"/>
    </location>
</feature>
<dbReference type="EMBL" id="AC003672">
    <property type="protein sequence ID" value="AAC27470.1"/>
    <property type="molecule type" value="Genomic_DNA"/>
</dbReference>
<dbReference type="EMBL" id="CP002685">
    <property type="protein sequence ID" value="AEC10454.1"/>
    <property type="molecule type" value="Genomic_DNA"/>
</dbReference>
<dbReference type="EMBL" id="CP002685">
    <property type="protein sequence ID" value="AEC10455.1"/>
    <property type="molecule type" value="Genomic_DNA"/>
</dbReference>
<dbReference type="EMBL" id="AY052265">
    <property type="protein sequence ID" value="AAK97735.1"/>
    <property type="molecule type" value="mRNA"/>
</dbReference>
<dbReference type="EMBL" id="AY062585">
    <property type="protein sequence ID" value="AAL32663.1"/>
    <property type="molecule type" value="mRNA"/>
</dbReference>
<dbReference type="EMBL" id="AY060523">
    <property type="protein sequence ID" value="AAL31136.1"/>
    <property type="molecule type" value="mRNA"/>
</dbReference>
<dbReference type="EMBL" id="AY093344">
    <property type="protein sequence ID" value="AAM13343.1"/>
    <property type="molecule type" value="mRNA"/>
</dbReference>
<dbReference type="EMBL" id="AY088075">
    <property type="protein sequence ID" value="AAM65621.1"/>
    <property type="molecule type" value="mRNA"/>
</dbReference>
<dbReference type="PIR" id="T01595">
    <property type="entry name" value="T01595"/>
</dbReference>
<dbReference type="RefSeq" id="NP_181996.1">
    <molecule id="O80507-1"/>
    <property type="nucleotide sequence ID" value="NM_130032.3"/>
</dbReference>
<dbReference type="RefSeq" id="NP_850421.1">
    <molecule id="O80507-2"/>
    <property type="nucleotide sequence ID" value="NM_180090.2"/>
</dbReference>
<dbReference type="SMR" id="O80507"/>
<dbReference type="BioGRID" id="4412">
    <property type="interactions" value="6"/>
</dbReference>
<dbReference type="FunCoup" id="O80507">
    <property type="interactions" value="4562"/>
</dbReference>
<dbReference type="IntAct" id="O80507">
    <property type="interactions" value="1"/>
</dbReference>
<dbReference type="STRING" id="3702.O80507"/>
<dbReference type="PaxDb" id="3702-AT2G44680.1"/>
<dbReference type="ProteomicsDB" id="220359">
    <molecule id="O80507-1"/>
</dbReference>
<dbReference type="EnsemblPlants" id="AT2G44680.1">
    <molecule id="O80507-1"/>
    <property type="protein sequence ID" value="AT2G44680.1"/>
    <property type="gene ID" value="AT2G44680"/>
</dbReference>
<dbReference type="EnsemblPlants" id="AT2G44680.2">
    <molecule id="O80507-2"/>
    <property type="protein sequence ID" value="AT2G44680.2"/>
    <property type="gene ID" value="AT2G44680"/>
</dbReference>
<dbReference type="GeneID" id="819076"/>
<dbReference type="Gramene" id="AT2G44680.1">
    <molecule id="O80507-1"/>
    <property type="protein sequence ID" value="AT2G44680.1"/>
    <property type="gene ID" value="AT2G44680"/>
</dbReference>
<dbReference type="Gramene" id="AT2G44680.2">
    <molecule id="O80507-2"/>
    <property type="protein sequence ID" value="AT2G44680.2"/>
    <property type="gene ID" value="AT2G44680"/>
</dbReference>
<dbReference type="KEGG" id="ath:AT2G44680"/>
<dbReference type="Araport" id="AT2G44680"/>
<dbReference type="TAIR" id="AT2G44680">
    <property type="gene designation" value="CKB4"/>
</dbReference>
<dbReference type="eggNOG" id="KOG3092">
    <property type="taxonomic scope" value="Eukaryota"/>
</dbReference>
<dbReference type="HOGENOM" id="CLU_034027_3_1_1"/>
<dbReference type="InParanoid" id="O80507"/>
<dbReference type="OMA" id="QYLLMTY"/>
<dbReference type="OrthoDB" id="3971593at2759"/>
<dbReference type="PhylomeDB" id="O80507"/>
<dbReference type="PRO" id="PR:O80507"/>
<dbReference type="Proteomes" id="UP000006548">
    <property type="component" value="Chromosome 2"/>
</dbReference>
<dbReference type="ExpressionAtlas" id="O80507">
    <property type="expression patterns" value="baseline and differential"/>
</dbReference>
<dbReference type="GO" id="GO:0005737">
    <property type="term" value="C:cytoplasm"/>
    <property type="evidence" value="ECO:0007005"/>
    <property type="project" value="TAIR"/>
</dbReference>
<dbReference type="GO" id="GO:0005829">
    <property type="term" value="C:cytosol"/>
    <property type="evidence" value="ECO:0000314"/>
    <property type="project" value="UniProtKB"/>
</dbReference>
<dbReference type="GO" id="GO:0005634">
    <property type="term" value="C:nucleus"/>
    <property type="evidence" value="ECO:0000314"/>
    <property type="project" value="TAIR"/>
</dbReference>
<dbReference type="GO" id="GO:0005956">
    <property type="term" value="C:protein kinase CK2 complex"/>
    <property type="evidence" value="ECO:0007669"/>
    <property type="project" value="InterPro"/>
</dbReference>
<dbReference type="GO" id="GO:0019887">
    <property type="term" value="F:protein kinase regulator activity"/>
    <property type="evidence" value="ECO:0007669"/>
    <property type="project" value="InterPro"/>
</dbReference>
<dbReference type="GO" id="GO:0004674">
    <property type="term" value="F:protein serine/threonine kinase activity"/>
    <property type="evidence" value="ECO:0000315"/>
    <property type="project" value="TAIR"/>
</dbReference>
<dbReference type="GO" id="GO:0007623">
    <property type="term" value="P:circadian rhythm"/>
    <property type="evidence" value="ECO:0000315"/>
    <property type="project" value="TAIR"/>
</dbReference>
<dbReference type="GO" id="GO:0048573">
    <property type="term" value="P:photoperiodism, flowering"/>
    <property type="evidence" value="ECO:0000315"/>
    <property type="project" value="TAIR"/>
</dbReference>
<dbReference type="GO" id="GO:0042753">
    <property type="term" value="P:positive regulation of circadian rhythm"/>
    <property type="evidence" value="ECO:0000315"/>
    <property type="project" value="TAIR"/>
</dbReference>
<dbReference type="FunFam" id="1.10.1820.10:FF:000002">
    <property type="entry name" value="Casein kinase II subunit beta"/>
    <property type="match status" value="1"/>
</dbReference>
<dbReference type="FunFam" id="2.20.25.20:FF:000003">
    <property type="entry name" value="Casein kinase II subunit beta"/>
    <property type="match status" value="1"/>
</dbReference>
<dbReference type="Gene3D" id="2.20.25.20">
    <property type="match status" value="1"/>
</dbReference>
<dbReference type="Gene3D" id="1.10.1820.10">
    <property type="entry name" value="protein kinase ck2 holoenzyme, chain C, domain 1"/>
    <property type="match status" value="1"/>
</dbReference>
<dbReference type="InterPro" id="IPR016149">
    <property type="entry name" value="Casein_kin_II_reg-sub_N"/>
</dbReference>
<dbReference type="InterPro" id="IPR035991">
    <property type="entry name" value="Casein_kinase_II_beta-like"/>
</dbReference>
<dbReference type="InterPro" id="IPR000704">
    <property type="entry name" value="Casein_kinase_II_reg-sub"/>
</dbReference>
<dbReference type="PANTHER" id="PTHR11740">
    <property type="entry name" value="CASEIN KINASE II SUBUNIT BETA"/>
    <property type="match status" value="1"/>
</dbReference>
<dbReference type="PANTHER" id="PTHR11740:SF35">
    <property type="entry name" value="CASEIN KINASE II SUBUNIT BETA-4-RELATED"/>
    <property type="match status" value="1"/>
</dbReference>
<dbReference type="Pfam" id="PF01214">
    <property type="entry name" value="CK_II_beta"/>
    <property type="match status" value="1"/>
</dbReference>
<dbReference type="PRINTS" id="PR00472">
    <property type="entry name" value="CASNKINASEII"/>
</dbReference>
<dbReference type="SMART" id="SM01085">
    <property type="entry name" value="CK_II_beta"/>
    <property type="match status" value="1"/>
</dbReference>
<dbReference type="SUPFAM" id="SSF57798">
    <property type="entry name" value="Casein kinase II beta subunit"/>
    <property type="match status" value="1"/>
</dbReference>
<dbReference type="PROSITE" id="PS01101">
    <property type="entry name" value="CK2_BETA"/>
    <property type="match status" value="1"/>
</dbReference>
<gene>
    <name evidence="7" type="primary">CKB4</name>
    <name type="ordered locus">At2g44680</name>
    <name type="ORF">F16B22.17</name>
</gene>
<comment type="function">
    <text evidence="4 5">Plays a complex role in regulating the basal catalytic activity of the alpha subunit. The tetrameric holoenzyme CK2, composed of two alpha and two beta subunits, phosphorylates the transcription factor PIF1 after an exposure to light, resulting in a proteasome-dependent degradation of PIF1 and promotion of photomorphogenesis (PubMed:21330376). CK2 phosphorylates translation initiation factors. May participate in the regulation of the initiation of translation (PubMed:19509278).</text>
</comment>
<comment type="subunit">
    <text evidence="4">Heterotetramer of two catalytic alpha subunits and two regulatory beta subunits.</text>
</comment>
<comment type="interaction">
    <interactant intactId="EBI-25528847">
        <id>O80507</id>
    </interactant>
    <interactant intactId="EBI-2363213">
        <id>Q8H1R0</id>
        <label>PYL10</label>
    </interactant>
    <organismsDiffer>false</organismsDiffer>
    <experiments>5</experiments>
</comment>
<comment type="subcellular location">
    <subcellularLocation>
        <location evidence="3">Cytoplasm</location>
        <location evidence="3">Cytosol</location>
    </subcellularLocation>
</comment>
<comment type="alternative products">
    <event type="alternative splicing"/>
    <isoform>
        <id>O80507-1</id>
        <name>1</name>
        <sequence type="displayed"/>
    </isoform>
    <isoform>
        <id>O80507-2</id>
        <name>2</name>
        <sequence type="described" ref="VSP_009188"/>
    </isoform>
</comment>
<comment type="PTM">
    <text evidence="1">Phosphorylated by alpha subunit.</text>
</comment>
<comment type="similarity">
    <text evidence="7">Belongs to the casein kinase 2 subunit beta family.</text>
</comment>
<proteinExistence type="evidence at protein level"/>
<evidence type="ECO:0000250" key="1"/>
<evidence type="ECO:0000256" key="2">
    <source>
        <dbReference type="SAM" id="MobiDB-lite"/>
    </source>
</evidence>
<evidence type="ECO:0000269" key="3">
    <source>
    </source>
</evidence>
<evidence type="ECO:0000269" key="4">
    <source>
    </source>
</evidence>
<evidence type="ECO:0000269" key="5">
    <source>
    </source>
</evidence>
<evidence type="ECO:0000303" key="6">
    <source>
    </source>
</evidence>
<evidence type="ECO:0000305" key="7"/>
<keyword id="KW-0025">Alternative splicing</keyword>
<keyword id="KW-0963">Cytoplasm</keyword>
<keyword id="KW-0597">Phosphoprotein</keyword>
<keyword id="KW-1185">Reference proteome</keyword>
<name>CSK2E_ARATH</name>
<reference key="1">
    <citation type="journal article" date="1999" name="Nature">
        <title>Sequence and analysis of chromosome 2 of the plant Arabidopsis thaliana.</title>
        <authorList>
            <person name="Lin X."/>
            <person name="Kaul S."/>
            <person name="Rounsley S.D."/>
            <person name="Shea T.P."/>
            <person name="Benito M.-I."/>
            <person name="Town C.D."/>
            <person name="Fujii C.Y."/>
            <person name="Mason T.M."/>
            <person name="Bowman C.L."/>
            <person name="Barnstead M.E."/>
            <person name="Feldblyum T.V."/>
            <person name="Buell C.R."/>
            <person name="Ketchum K.A."/>
            <person name="Lee J.J."/>
            <person name="Ronning C.M."/>
            <person name="Koo H.L."/>
            <person name="Moffat K.S."/>
            <person name="Cronin L.A."/>
            <person name="Shen M."/>
            <person name="Pai G."/>
            <person name="Van Aken S."/>
            <person name="Umayam L."/>
            <person name="Tallon L.J."/>
            <person name="Gill J.E."/>
            <person name="Adams M.D."/>
            <person name="Carrera A.J."/>
            <person name="Creasy T.H."/>
            <person name="Goodman H.M."/>
            <person name="Somerville C.R."/>
            <person name="Copenhaver G.P."/>
            <person name="Preuss D."/>
            <person name="Nierman W.C."/>
            <person name="White O."/>
            <person name="Eisen J.A."/>
            <person name="Salzberg S.L."/>
            <person name="Fraser C.M."/>
            <person name="Venter J.C."/>
        </authorList>
    </citation>
    <scope>NUCLEOTIDE SEQUENCE [LARGE SCALE GENOMIC DNA]</scope>
    <source>
        <strain>cv. Columbia</strain>
    </source>
</reference>
<reference key="2">
    <citation type="journal article" date="2017" name="Plant J.">
        <title>Araport11: a complete reannotation of the Arabidopsis thaliana reference genome.</title>
        <authorList>
            <person name="Cheng C.Y."/>
            <person name="Krishnakumar V."/>
            <person name="Chan A.P."/>
            <person name="Thibaud-Nissen F."/>
            <person name="Schobel S."/>
            <person name="Town C.D."/>
        </authorList>
    </citation>
    <scope>GENOME REANNOTATION</scope>
    <source>
        <strain>cv. Columbia</strain>
    </source>
</reference>
<reference key="3">
    <citation type="journal article" date="2003" name="Science">
        <title>Empirical analysis of transcriptional activity in the Arabidopsis genome.</title>
        <authorList>
            <person name="Yamada K."/>
            <person name="Lim J."/>
            <person name="Dale J.M."/>
            <person name="Chen H."/>
            <person name="Shinn P."/>
            <person name="Palm C.J."/>
            <person name="Southwick A.M."/>
            <person name="Wu H.C."/>
            <person name="Kim C.J."/>
            <person name="Nguyen M."/>
            <person name="Pham P.K."/>
            <person name="Cheuk R.F."/>
            <person name="Karlin-Newmann G."/>
            <person name="Liu S.X."/>
            <person name="Lam B."/>
            <person name="Sakano H."/>
            <person name="Wu T."/>
            <person name="Yu G."/>
            <person name="Miranda M."/>
            <person name="Quach H.L."/>
            <person name="Tripp M."/>
            <person name="Chang C.H."/>
            <person name="Lee J.M."/>
            <person name="Toriumi M.J."/>
            <person name="Chan M.M."/>
            <person name="Tang C.C."/>
            <person name="Onodera C.S."/>
            <person name="Deng J.M."/>
            <person name="Akiyama K."/>
            <person name="Ansari Y."/>
            <person name="Arakawa T."/>
            <person name="Banh J."/>
            <person name="Banno F."/>
            <person name="Bowser L."/>
            <person name="Brooks S.Y."/>
            <person name="Carninci P."/>
            <person name="Chao Q."/>
            <person name="Choy N."/>
            <person name="Enju A."/>
            <person name="Goldsmith A.D."/>
            <person name="Gurjal M."/>
            <person name="Hansen N.F."/>
            <person name="Hayashizaki Y."/>
            <person name="Johnson-Hopson C."/>
            <person name="Hsuan V.W."/>
            <person name="Iida K."/>
            <person name="Karnes M."/>
            <person name="Khan S."/>
            <person name="Koesema E."/>
            <person name="Ishida J."/>
            <person name="Jiang P.X."/>
            <person name="Jones T."/>
            <person name="Kawai J."/>
            <person name="Kamiya A."/>
            <person name="Meyers C."/>
            <person name="Nakajima M."/>
            <person name="Narusaka M."/>
            <person name="Seki M."/>
            <person name="Sakurai T."/>
            <person name="Satou M."/>
            <person name="Tamse R."/>
            <person name="Vaysberg M."/>
            <person name="Wallender E.K."/>
            <person name="Wong C."/>
            <person name="Yamamura Y."/>
            <person name="Yuan S."/>
            <person name="Shinozaki K."/>
            <person name="Davis R.W."/>
            <person name="Theologis A."/>
            <person name="Ecker J.R."/>
        </authorList>
    </citation>
    <scope>NUCLEOTIDE SEQUENCE [LARGE SCALE MRNA] (ISOFORM 2)</scope>
    <source>
        <strain>cv. Columbia</strain>
    </source>
</reference>
<reference key="4">
    <citation type="submission" date="2002-03" db="EMBL/GenBank/DDBJ databases">
        <title>Full-length cDNA from Arabidopsis thaliana.</title>
        <authorList>
            <person name="Brover V.V."/>
            <person name="Troukhan M.E."/>
            <person name="Alexandrov N.A."/>
            <person name="Lu Y.-P."/>
            <person name="Flavell R.B."/>
            <person name="Feldmann K.A."/>
        </authorList>
    </citation>
    <scope>NUCLEOTIDE SEQUENCE [LARGE SCALE MRNA] (ISOFORM 1)</scope>
</reference>
<reference key="5">
    <citation type="journal article" date="2006" name="Plant Cell Physiol.">
        <title>An extensive survey of CK2 alpha and beta subunits in Arabidopsis: multiple isoforms exhibit differential subcellular localization.</title>
        <authorList>
            <person name="Salinas P."/>
            <person name="Fuentes D."/>
            <person name="Vidal E."/>
            <person name="Jordana X."/>
            <person name="Echeverria M."/>
            <person name="Holuigue L."/>
        </authorList>
    </citation>
    <scope>SUBCELLULAR LOCATION</scope>
</reference>
<reference key="6">
    <citation type="journal article" date="2009" name="J. Biol. Chem.">
        <title>Differential phosphorylation of plant translation initiation factors by Arabidopsis thaliana CK2 holoenzymes.</title>
        <authorList>
            <person name="Dennis M.D."/>
            <person name="Browning K.S."/>
        </authorList>
    </citation>
    <scope>FUNCTION</scope>
    <scope>SUBUNIT</scope>
</reference>
<reference key="7">
    <citation type="journal article" date="2011" name="J. Biol. Chem.">
        <title>Phosphorylation by CK2 enhances the rapid light-induced degradation of phytochrome interacting factor 1 in Arabidopsis.</title>
        <authorList>
            <person name="Bu Q."/>
            <person name="Zhu L."/>
            <person name="Dennis M.D."/>
            <person name="Yu L."/>
            <person name="Lu S.X."/>
            <person name="Person M.D."/>
            <person name="Tobin E.M."/>
            <person name="Browning K.S."/>
            <person name="Huq E."/>
        </authorList>
    </citation>
    <scope>FUNCTION</scope>
</reference>
<protein>
    <recommendedName>
        <fullName>Putative casein kinase II subunit beta-4</fullName>
        <shortName>CK II beta-4</shortName>
    </recommendedName>
</protein>
<sequence length="283" mass="31631">MYKDRSGGGIMGGGGSSRSEILGGAIDRKRINDALDKHLKKSSPSTSRVFTSKDKDSVPSTSTAKSQLHSRSPDVESDTDSEGSDVSGSEGDDTSWISWFCNLRGNEFFCEVDEDYIQDDFNLCGLSGQVPYYDYALDLILDVESSNGDMFTEEQHEMVESAAEMLYGLIHVRYILTTKGMAAMMEKYKNYDFGRCPRVFCCGQSCLPVGQSDIPRSSTVKIYCPKCEDIYYPRSKYQGNIDGAYFGTTFPHLFLMAYGNMKPQKPAQNYVPKIFGFKVHNKQ</sequence>
<accession>O80507</accession>
<accession>Q941C4</accession>